<reference key="1">
    <citation type="journal article" date="2005" name="J. Bacteriol.">
        <title>Genomic sequence of an otitis media isolate of nontypeable Haemophilus influenzae: comparative study with H. influenzae serotype d, strain KW20.</title>
        <authorList>
            <person name="Harrison A."/>
            <person name="Dyer D.W."/>
            <person name="Gillaspy A."/>
            <person name="Ray W.C."/>
            <person name="Mungur R."/>
            <person name="Carson M.B."/>
            <person name="Zhong H."/>
            <person name="Gipson J."/>
            <person name="Gipson M."/>
            <person name="Johnson L.S."/>
            <person name="Lewis L."/>
            <person name="Bakaletz L.O."/>
            <person name="Munson R.S. Jr."/>
        </authorList>
    </citation>
    <scope>NUCLEOTIDE SEQUENCE [LARGE SCALE GENOMIC DNA]</scope>
    <source>
        <strain>86-028NP</strain>
    </source>
</reference>
<gene>
    <name evidence="1" type="primary">dapD</name>
    <name type="ordered locus">NTHI1406</name>
</gene>
<feature type="chain" id="PRO_0000196941" description="2,3,4,5-tetrahydropyridine-2,6-dicarboxylate N-succinyltransferase">
    <location>
        <begin position="1"/>
        <end position="275"/>
    </location>
</feature>
<feature type="binding site" evidence="1">
    <location>
        <position position="104"/>
    </location>
    <ligand>
        <name>substrate</name>
    </ligand>
</feature>
<feature type="binding site" evidence="1">
    <location>
        <position position="141"/>
    </location>
    <ligand>
        <name>substrate</name>
    </ligand>
</feature>
<keyword id="KW-0012">Acyltransferase</keyword>
<keyword id="KW-0028">Amino-acid biosynthesis</keyword>
<keyword id="KW-0963">Cytoplasm</keyword>
<keyword id="KW-0220">Diaminopimelate biosynthesis</keyword>
<keyword id="KW-0457">Lysine biosynthesis</keyword>
<keyword id="KW-0677">Repeat</keyword>
<keyword id="KW-0808">Transferase</keyword>
<comment type="catalytic activity">
    <reaction evidence="1">
        <text>(S)-2,3,4,5-tetrahydrodipicolinate + succinyl-CoA + H2O = (S)-2-succinylamino-6-oxoheptanedioate + CoA</text>
        <dbReference type="Rhea" id="RHEA:17325"/>
        <dbReference type="ChEBI" id="CHEBI:15377"/>
        <dbReference type="ChEBI" id="CHEBI:15685"/>
        <dbReference type="ChEBI" id="CHEBI:16845"/>
        <dbReference type="ChEBI" id="CHEBI:57287"/>
        <dbReference type="ChEBI" id="CHEBI:57292"/>
        <dbReference type="EC" id="2.3.1.117"/>
    </reaction>
</comment>
<comment type="pathway">
    <text evidence="1">Amino-acid biosynthesis; L-lysine biosynthesis via DAP pathway; LL-2,6-diaminopimelate from (S)-tetrahydrodipicolinate (succinylase route): step 1/3.</text>
</comment>
<comment type="subunit">
    <text evidence="1">Homotrimer.</text>
</comment>
<comment type="subcellular location">
    <subcellularLocation>
        <location evidence="1">Cytoplasm</location>
    </subcellularLocation>
</comment>
<comment type="similarity">
    <text evidence="1">Belongs to the transferase hexapeptide repeat family.</text>
</comment>
<comment type="sequence caution" evidence="2">
    <conflict type="erroneous initiation">
        <sequence resource="EMBL-CDS" id="AAX88228"/>
    </conflict>
</comment>
<evidence type="ECO:0000255" key="1">
    <source>
        <dbReference type="HAMAP-Rule" id="MF_00811"/>
    </source>
</evidence>
<evidence type="ECO:0000305" key="2"/>
<accession>Q4QL69</accession>
<protein>
    <recommendedName>
        <fullName evidence="1">2,3,4,5-tetrahydropyridine-2,6-dicarboxylate N-succinyltransferase</fullName>
        <ecNumber evidence="1">2.3.1.117</ecNumber>
    </recommendedName>
    <alternativeName>
        <fullName evidence="1">Tetrahydrodipicolinate N-succinyltransferase</fullName>
        <shortName evidence="1">THDP succinyltransferase</shortName>
        <shortName evidence="1">THP succinyltransferase</shortName>
        <shortName evidence="1">Tetrahydropicolinate succinylase</shortName>
    </alternativeName>
</protein>
<name>DAPD_HAEI8</name>
<proteinExistence type="inferred from homology"/>
<organism>
    <name type="scientific">Haemophilus influenzae (strain 86-028NP)</name>
    <dbReference type="NCBI Taxonomy" id="281310"/>
    <lineage>
        <taxon>Bacteria</taxon>
        <taxon>Pseudomonadati</taxon>
        <taxon>Pseudomonadota</taxon>
        <taxon>Gammaproteobacteria</taxon>
        <taxon>Pasteurellales</taxon>
        <taxon>Pasteurellaceae</taxon>
        <taxon>Haemophilus</taxon>
    </lineage>
</organism>
<dbReference type="EC" id="2.3.1.117" evidence="1"/>
<dbReference type="EMBL" id="CP000057">
    <property type="protein sequence ID" value="AAX88228.1"/>
    <property type="status" value="ALT_INIT"/>
    <property type="molecule type" value="Genomic_DNA"/>
</dbReference>
<dbReference type="RefSeq" id="WP_011272457.1">
    <property type="nucleotide sequence ID" value="NC_007146.2"/>
</dbReference>
<dbReference type="SMR" id="Q4QL69"/>
<dbReference type="KEGG" id="hit:NTHI1406"/>
<dbReference type="HOGENOM" id="CLU_050859_0_1_6"/>
<dbReference type="UniPathway" id="UPA00034">
    <property type="reaction ID" value="UER00019"/>
</dbReference>
<dbReference type="Proteomes" id="UP000002525">
    <property type="component" value="Chromosome"/>
</dbReference>
<dbReference type="GO" id="GO:0005737">
    <property type="term" value="C:cytoplasm"/>
    <property type="evidence" value="ECO:0007669"/>
    <property type="project" value="UniProtKB-SubCell"/>
</dbReference>
<dbReference type="GO" id="GO:0008666">
    <property type="term" value="F:2,3,4,5-tetrahydropyridine-2,6-dicarboxylate N-succinyltransferase activity"/>
    <property type="evidence" value="ECO:0007669"/>
    <property type="project" value="UniProtKB-UniRule"/>
</dbReference>
<dbReference type="GO" id="GO:0016779">
    <property type="term" value="F:nucleotidyltransferase activity"/>
    <property type="evidence" value="ECO:0007669"/>
    <property type="project" value="TreeGrafter"/>
</dbReference>
<dbReference type="GO" id="GO:0019877">
    <property type="term" value="P:diaminopimelate biosynthetic process"/>
    <property type="evidence" value="ECO:0007669"/>
    <property type="project" value="UniProtKB-UniRule"/>
</dbReference>
<dbReference type="GO" id="GO:0009089">
    <property type="term" value="P:lysine biosynthetic process via diaminopimelate"/>
    <property type="evidence" value="ECO:0007669"/>
    <property type="project" value="UniProtKB-UniRule"/>
</dbReference>
<dbReference type="CDD" id="cd03350">
    <property type="entry name" value="LbH_THP_succinylT"/>
    <property type="match status" value="1"/>
</dbReference>
<dbReference type="Gene3D" id="2.160.10.10">
    <property type="entry name" value="Hexapeptide repeat proteins"/>
    <property type="match status" value="1"/>
</dbReference>
<dbReference type="Gene3D" id="1.10.166.10">
    <property type="entry name" value="Tetrahydrodipicolinate-N-succinyltransferase, N-terminal domain"/>
    <property type="match status" value="1"/>
</dbReference>
<dbReference type="HAMAP" id="MF_00811">
    <property type="entry name" value="DapD"/>
    <property type="match status" value="1"/>
</dbReference>
<dbReference type="InterPro" id="IPR005664">
    <property type="entry name" value="DapD_Trfase_Hexpep_rpt_fam"/>
</dbReference>
<dbReference type="InterPro" id="IPR001451">
    <property type="entry name" value="Hexapep"/>
</dbReference>
<dbReference type="InterPro" id="IPR018357">
    <property type="entry name" value="Hexapep_transf_CS"/>
</dbReference>
<dbReference type="InterPro" id="IPR023180">
    <property type="entry name" value="THP_succinylTrfase_dom1"/>
</dbReference>
<dbReference type="InterPro" id="IPR037133">
    <property type="entry name" value="THP_succinylTrfase_N_sf"/>
</dbReference>
<dbReference type="InterPro" id="IPR011004">
    <property type="entry name" value="Trimer_LpxA-like_sf"/>
</dbReference>
<dbReference type="NCBIfam" id="TIGR00965">
    <property type="entry name" value="dapD"/>
    <property type="match status" value="1"/>
</dbReference>
<dbReference type="NCBIfam" id="NF008808">
    <property type="entry name" value="PRK11830.1"/>
    <property type="match status" value="1"/>
</dbReference>
<dbReference type="PANTHER" id="PTHR19136:SF52">
    <property type="entry name" value="2,3,4,5-TETRAHYDROPYRIDINE-2,6-DICARBOXYLATE N-SUCCINYLTRANSFERASE"/>
    <property type="match status" value="1"/>
</dbReference>
<dbReference type="PANTHER" id="PTHR19136">
    <property type="entry name" value="MOLYBDENUM COFACTOR GUANYLYLTRANSFERASE"/>
    <property type="match status" value="1"/>
</dbReference>
<dbReference type="Pfam" id="PF14602">
    <property type="entry name" value="Hexapep_2"/>
    <property type="match status" value="1"/>
</dbReference>
<dbReference type="Pfam" id="PF14805">
    <property type="entry name" value="THDPS_N_2"/>
    <property type="match status" value="1"/>
</dbReference>
<dbReference type="SUPFAM" id="SSF51161">
    <property type="entry name" value="Trimeric LpxA-like enzymes"/>
    <property type="match status" value="1"/>
</dbReference>
<dbReference type="PROSITE" id="PS00101">
    <property type="entry name" value="HEXAPEP_TRANSFERASES"/>
    <property type="match status" value="1"/>
</dbReference>
<sequence>MSNLQAIIEAAFEKRAEITPKTVDAETHAAIEEVIEGLDSGKYRVAEKIAGEWVTHQWLKKAVLLSFRINDNQIIDGAETKYYDKVALKFADYTEERFTEEGFRVVPSATVRKGAYISKNCVLMPSYVNIGAYVGEGTMVDTWATVGSCAQIGKNVHLSGGVGIGGVLEPLQANPTIIGDNCFIGARSEVVEGVIVEDGCVISMGVFIGQSTKIYDRETGEIHYGRVPAGSVVVSGSLPSKCGKYSLYCAVIVKKVDAKTLGKVGINELLRSIEE</sequence>